<gene>
    <name evidence="1" type="primary">rpsC</name>
    <name type="ordered locus">YPDSF_0139</name>
</gene>
<feature type="chain" id="PRO_0000293918" description="Small ribosomal subunit protein uS3">
    <location>
        <begin position="1"/>
        <end position="232"/>
    </location>
</feature>
<feature type="domain" description="KH type-2" evidence="1">
    <location>
        <begin position="39"/>
        <end position="107"/>
    </location>
</feature>
<dbReference type="EMBL" id="CP000668">
    <property type="protein sequence ID" value="ABP38561.1"/>
    <property type="molecule type" value="Genomic_DNA"/>
</dbReference>
<dbReference type="RefSeq" id="WP_002221644.1">
    <property type="nucleotide sequence ID" value="NZ_CP009715.1"/>
</dbReference>
<dbReference type="SMR" id="A4TGZ8"/>
<dbReference type="GeneID" id="97454237"/>
<dbReference type="KEGG" id="ypp:YPDSF_0139"/>
<dbReference type="PATRIC" id="fig|386656.14.peg.428"/>
<dbReference type="GO" id="GO:0022627">
    <property type="term" value="C:cytosolic small ribosomal subunit"/>
    <property type="evidence" value="ECO:0007669"/>
    <property type="project" value="TreeGrafter"/>
</dbReference>
<dbReference type="GO" id="GO:0003729">
    <property type="term" value="F:mRNA binding"/>
    <property type="evidence" value="ECO:0007669"/>
    <property type="project" value="UniProtKB-UniRule"/>
</dbReference>
<dbReference type="GO" id="GO:0019843">
    <property type="term" value="F:rRNA binding"/>
    <property type="evidence" value="ECO:0007669"/>
    <property type="project" value="UniProtKB-UniRule"/>
</dbReference>
<dbReference type="GO" id="GO:0003735">
    <property type="term" value="F:structural constituent of ribosome"/>
    <property type="evidence" value="ECO:0007669"/>
    <property type="project" value="InterPro"/>
</dbReference>
<dbReference type="GO" id="GO:0006412">
    <property type="term" value="P:translation"/>
    <property type="evidence" value="ECO:0007669"/>
    <property type="project" value="UniProtKB-UniRule"/>
</dbReference>
<dbReference type="CDD" id="cd02412">
    <property type="entry name" value="KH-II_30S_S3"/>
    <property type="match status" value="1"/>
</dbReference>
<dbReference type="FunFam" id="3.30.1140.32:FF:000001">
    <property type="entry name" value="30S ribosomal protein S3"/>
    <property type="match status" value="1"/>
</dbReference>
<dbReference type="FunFam" id="3.30.300.20:FF:000001">
    <property type="entry name" value="30S ribosomal protein S3"/>
    <property type="match status" value="1"/>
</dbReference>
<dbReference type="Gene3D" id="3.30.300.20">
    <property type="match status" value="1"/>
</dbReference>
<dbReference type="Gene3D" id="3.30.1140.32">
    <property type="entry name" value="Ribosomal protein S3, C-terminal domain"/>
    <property type="match status" value="1"/>
</dbReference>
<dbReference type="HAMAP" id="MF_01309_B">
    <property type="entry name" value="Ribosomal_uS3_B"/>
    <property type="match status" value="1"/>
</dbReference>
<dbReference type="InterPro" id="IPR004087">
    <property type="entry name" value="KH_dom"/>
</dbReference>
<dbReference type="InterPro" id="IPR015946">
    <property type="entry name" value="KH_dom-like_a/b"/>
</dbReference>
<dbReference type="InterPro" id="IPR004044">
    <property type="entry name" value="KH_dom_type_2"/>
</dbReference>
<dbReference type="InterPro" id="IPR009019">
    <property type="entry name" value="KH_sf_prok-type"/>
</dbReference>
<dbReference type="InterPro" id="IPR036419">
    <property type="entry name" value="Ribosomal_S3_C_sf"/>
</dbReference>
<dbReference type="InterPro" id="IPR005704">
    <property type="entry name" value="Ribosomal_uS3_bac-typ"/>
</dbReference>
<dbReference type="InterPro" id="IPR001351">
    <property type="entry name" value="Ribosomal_uS3_C"/>
</dbReference>
<dbReference type="InterPro" id="IPR018280">
    <property type="entry name" value="Ribosomal_uS3_CS"/>
</dbReference>
<dbReference type="NCBIfam" id="TIGR01009">
    <property type="entry name" value="rpsC_bact"/>
    <property type="match status" value="1"/>
</dbReference>
<dbReference type="PANTHER" id="PTHR11760">
    <property type="entry name" value="30S/40S RIBOSOMAL PROTEIN S3"/>
    <property type="match status" value="1"/>
</dbReference>
<dbReference type="PANTHER" id="PTHR11760:SF19">
    <property type="entry name" value="SMALL RIBOSOMAL SUBUNIT PROTEIN US3C"/>
    <property type="match status" value="1"/>
</dbReference>
<dbReference type="Pfam" id="PF07650">
    <property type="entry name" value="KH_2"/>
    <property type="match status" value="1"/>
</dbReference>
<dbReference type="Pfam" id="PF00189">
    <property type="entry name" value="Ribosomal_S3_C"/>
    <property type="match status" value="1"/>
</dbReference>
<dbReference type="SMART" id="SM00322">
    <property type="entry name" value="KH"/>
    <property type="match status" value="1"/>
</dbReference>
<dbReference type="SUPFAM" id="SSF54814">
    <property type="entry name" value="Prokaryotic type KH domain (KH-domain type II)"/>
    <property type="match status" value="1"/>
</dbReference>
<dbReference type="SUPFAM" id="SSF54821">
    <property type="entry name" value="Ribosomal protein S3 C-terminal domain"/>
    <property type="match status" value="1"/>
</dbReference>
<dbReference type="PROSITE" id="PS50823">
    <property type="entry name" value="KH_TYPE_2"/>
    <property type="match status" value="1"/>
</dbReference>
<dbReference type="PROSITE" id="PS00548">
    <property type="entry name" value="RIBOSOMAL_S3"/>
    <property type="match status" value="1"/>
</dbReference>
<comment type="function">
    <text evidence="1">Binds the lower part of the 30S subunit head. Binds mRNA in the 70S ribosome, positioning it for translation.</text>
</comment>
<comment type="subunit">
    <text evidence="1">Part of the 30S ribosomal subunit. Forms a tight complex with proteins S10 and S14.</text>
</comment>
<comment type="similarity">
    <text evidence="1">Belongs to the universal ribosomal protein uS3 family.</text>
</comment>
<sequence length="232" mass="25829">MGQKVHPNGIRLGIVKAWNSTWYANTKEFADNLDSDFKVRQFLTKELAKASVSRIVIERPAKSIRVTIHTARPGIVIGKKGEDVEKLRKVVADIAGVPAQINIAEVRKPELDAKLVADSITSQLERRVMFRRAMKRAVQNAMRLGAKGIKVEVSGRLGGAEIARTEWYREGRVPLHTLRADIDYNTSEAHTTYGVIGVKVWIFKGEILGGMAAVEQPEPAAQPKKQQRKGRK</sequence>
<reference key="1">
    <citation type="submission" date="2007-02" db="EMBL/GenBank/DDBJ databases">
        <title>Complete sequence of chromosome of Yersinia pestis Pestoides F.</title>
        <authorList>
            <consortium name="US DOE Joint Genome Institute"/>
            <person name="Copeland A."/>
            <person name="Lucas S."/>
            <person name="Lapidus A."/>
            <person name="Barry K."/>
            <person name="Detter J.C."/>
            <person name="Glavina del Rio T."/>
            <person name="Hammon N."/>
            <person name="Israni S."/>
            <person name="Dalin E."/>
            <person name="Tice H."/>
            <person name="Pitluck S."/>
            <person name="Di Bartolo G."/>
            <person name="Chain P."/>
            <person name="Malfatti S."/>
            <person name="Shin M."/>
            <person name="Vergez L."/>
            <person name="Schmutz J."/>
            <person name="Larimer F."/>
            <person name="Land M."/>
            <person name="Hauser L."/>
            <person name="Worsham P."/>
            <person name="Chu M."/>
            <person name="Bearden S."/>
            <person name="Garcia E."/>
            <person name="Richardson P."/>
        </authorList>
    </citation>
    <scope>NUCLEOTIDE SEQUENCE [LARGE SCALE GENOMIC DNA]</scope>
    <source>
        <strain>Pestoides F</strain>
    </source>
</reference>
<evidence type="ECO:0000255" key="1">
    <source>
        <dbReference type="HAMAP-Rule" id="MF_01309"/>
    </source>
</evidence>
<evidence type="ECO:0000305" key="2"/>
<accession>A4TGZ8</accession>
<organism>
    <name type="scientific">Yersinia pestis (strain Pestoides F)</name>
    <dbReference type="NCBI Taxonomy" id="386656"/>
    <lineage>
        <taxon>Bacteria</taxon>
        <taxon>Pseudomonadati</taxon>
        <taxon>Pseudomonadota</taxon>
        <taxon>Gammaproteobacteria</taxon>
        <taxon>Enterobacterales</taxon>
        <taxon>Yersiniaceae</taxon>
        <taxon>Yersinia</taxon>
    </lineage>
</organism>
<proteinExistence type="inferred from homology"/>
<keyword id="KW-0687">Ribonucleoprotein</keyword>
<keyword id="KW-0689">Ribosomal protein</keyword>
<keyword id="KW-0694">RNA-binding</keyword>
<keyword id="KW-0699">rRNA-binding</keyword>
<protein>
    <recommendedName>
        <fullName evidence="1">Small ribosomal subunit protein uS3</fullName>
    </recommendedName>
    <alternativeName>
        <fullName evidence="2">30S ribosomal protein S3</fullName>
    </alternativeName>
</protein>
<name>RS3_YERPP</name>